<proteinExistence type="inferred from homology"/>
<comment type="function">
    <text evidence="2">NADH-dependent reductase for DPH3 and cytochrome b5. Required for the first step of diphthamide biosynthesis, a post-translational modification of histidine which occurs in elongation factor 2. DPH1 and DPH2 transfer a 3-amino-3-carboxypropyl (ACP) group from S-adenosyl-L-methionine (SAM) to a histidine residue, the reaction is assisted by a reduction system comprising DPH3 and a NADH-dependent reductase, predominantly MCR1.1. By reducing DPH3, also involved in the formation of the tRNA wobble base modification mcm5s 2U (5-methoxycarbonylmethyl-2-thiouridine), mediated by the elongator complex. The cytochrome b5/NADH cytochrome b5 reductase electron transfer system supports the catalytic activity of several sterol biosynthetic enzymes.</text>
</comment>
<comment type="catalytic activity">
    <reaction evidence="2">
        <text>2 Fe(III)-[cytochrome b5] + NADH = 2 Fe(II)-[cytochrome b5] + NAD(+) + H(+)</text>
        <dbReference type="Rhea" id="RHEA:46680"/>
        <dbReference type="Rhea" id="RHEA-COMP:10438"/>
        <dbReference type="Rhea" id="RHEA-COMP:10439"/>
        <dbReference type="ChEBI" id="CHEBI:15378"/>
        <dbReference type="ChEBI" id="CHEBI:29033"/>
        <dbReference type="ChEBI" id="CHEBI:29034"/>
        <dbReference type="ChEBI" id="CHEBI:57540"/>
        <dbReference type="ChEBI" id="CHEBI:57945"/>
        <dbReference type="EC" id="1.6.2.2"/>
    </reaction>
</comment>
<comment type="catalytic activity">
    <reaction evidence="2">
        <text>2 Fe(3+)-[Dph3] + NADH = 2 Fe(2+)-[Dph3] + NAD(+) + H(+)</text>
        <dbReference type="Rhea" id="RHEA:71231"/>
        <dbReference type="Rhea" id="RHEA-COMP:18002"/>
        <dbReference type="Rhea" id="RHEA-COMP:18003"/>
        <dbReference type="ChEBI" id="CHEBI:15378"/>
        <dbReference type="ChEBI" id="CHEBI:29033"/>
        <dbReference type="ChEBI" id="CHEBI:29034"/>
        <dbReference type="ChEBI" id="CHEBI:57540"/>
        <dbReference type="ChEBI" id="CHEBI:57945"/>
        <dbReference type="ChEBI" id="CHEBI:83228"/>
    </reaction>
    <physiologicalReaction direction="left-to-right" evidence="2">
        <dbReference type="Rhea" id="RHEA:71232"/>
    </physiologicalReaction>
</comment>
<comment type="cofactor">
    <cofactor evidence="3">
        <name>FAD</name>
        <dbReference type="ChEBI" id="CHEBI:57692"/>
    </cofactor>
</comment>
<comment type="pathway">
    <text evidence="2">Protein modification; peptidyl-diphthamide biosynthesis.</text>
</comment>
<comment type="subunit">
    <text evidence="2">Monomer. Component of the 2-(3-amino-3-carboxypropyl)histidine synthase complex composed of DPH1, DPH2, DPH3 and a NADH-dependent reductase, predominantly MCR1.1.</text>
</comment>
<comment type="subcellular location">
    <subcellularLocation>
        <location evidence="2">Mitochondrion outer membrane</location>
        <topology evidence="3">Single-pass membrane protein</topology>
    </subcellularLocation>
</comment>
<comment type="similarity">
    <text evidence="5">Belongs to the flavoprotein pyridine nucleotide cytochrome reductase family.</text>
</comment>
<sequence>MSGRVEVENIPGQVANLLKNVTAGDLLNVASSPAFLVAAAAIVIAAAFYSKVFNSTRPKPLDPSIWKEFPLQKKNQVSPNTAIYTFKLPHAEDVLGLPIGQHISVSADINGKNIVRSYTPISRQNARGRFELIIKTYEKGNISRHVASLKIGDTLRVKGPKGNFKYTPGLTAHLGMIAGGTGLAPMIQIVRAILQNPPDRTNITLIYANVNEEDILLRAELDALAMGYESRFNLFYVLNNPPSGWTGGVGFVTKEHIKDLLPNPNESNSKILICGPPPMVTAMKKNLEEIKYPVPNTISKLDDKVFVF</sequence>
<keyword id="KW-0274">FAD</keyword>
<keyword id="KW-0285">Flavoprotein</keyword>
<keyword id="KW-0472">Membrane</keyword>
<keyword id="KW-0496">Mitochondrion</keyword>
<keyword id="KW-1000">Mitochondrion outer membrane</keyword>
<keyword id="KW-0520">NAD</keyword>
<keyword id="KW-0560">Oxidoreductase</keyword>
<keyword id="KW-1185">Reference proteome</keyword>
<keyword id="KW-0808">Transferase</keyword>
<keyword id="KW-0812">Transmembrane</keyword>
<keyword id="KW-1133">Transmembrane helix</keyword>
<protein>
    <recommendedName>
        <fullName>NADH-cytochrome b5 reductase 1</fullName>
        <ecNumber evidence="2">1.6.2.2</ecNumber>
    </recommendedName>
    <alternativeName>
        <fullName>Microsomal cytochrome b reductase</fullName>
    </alternativeName>
</protein>
<evidence type="ECO:0000250" key="1"/>
<evidence type="ECO:0000250" key="2">
    <source>
        <dbReference type="UniProtKB" id="P38626"/>
    </source>
</evidence>
<evidence type="ECO:0000255" key="3"/>
<evidence type="ECO:0000255" key="4">
    <source>
        <dbReference type="PROSITE-ProRule" id="PRU00716"/>
    </source>
</evidence>
<evidence type="ECO:0000305" key="5"/>
<dbReference type="EC" id="1.6.2.2" evidence="2"/>
<dbReference type="EMBL" id="DS547091">
    <property type="protein sequence ID" value="EDR15673.1"/>
    <property type="molecule type" value="Genomic_DNA"/>
</dbReference>
<dbReference type="RefSeq" id="XP_001873881.1">
    <property type="nucleotide sequence ID" value="XM_001873846.1"/>
</dbReference>
<dbReference type="SMR" id="B0CQN7"/>
<dbReference type="FunCoup" id="B0CQN7">
    <property type="interactions" value="132"/>
</dbReference>
<dbReference type="STRING" id="486041.B0CQN7"/>
<dbReference type="GeneID" id="6069923"/>
<dbReference type="KEGG" id="lbc:LACBIDRAFT_300832"/>
<dbReference type="HOGENOM" id="CLU_003827_9_0_1"/>
<dbReference type="InParanoid" id="B0CQN7"/>
<dbReference type="OrthoDB" id="432685at2759"/>
<dbReference type="UniPathway" id="UPA00559"/>
<dbReference type="Proteomes" id="UP000001194">
    <property type="component" value="Unassembled WGS sequence"/>
</dbReference>
<dbReference type="GO" id="GO:0005783">
    <property type="term" value="C:endoplasmic reticulum"/>
    <property type="evidence" value="ECO:0007669"/>
    <property type="project" value="TreeGrafter"/>
</dbReference>
<dbReference type="GO" id="GO:0005741">
    <property type="term" value="C:mitochondrial outer membrane"/>
    <property type="evidence" value="ECO:0007669"/>
    <property type="project" value="UniProtKB-SubCell"/>
</dbReference>
<dbReference type="GO" id="GO:0004128">
    <property type="term" value="F:cytochrome-b5 reductase activity, acting on NAD(P)H"/>
    <property type="evidence" value="ECO:0000250"/>
    <property type="project" value="UniProtKB"/>
</dbReference>
<dbReference type="GO" id="GO:0003954">
    <property type="term" value="F:NADH dehydrogenase activity"/>
    <property type="evidence" value="ECO:0000250"/>
    <property type="project" value="UniProtKB"/>
</dbReference>
<dbReference type="GO" id="GO:0016740">
    <property type="term" value="F:transferase activity"/>
    <property type="evidence" value="ECO:0007669"/>
    <property type="project" value="UniProtKB-KW"/>
</dbReference>
<dbReference type="GO" id="GO:0017183">
    <property type="term" value="P:protein histidyl modification to diphthamide"/>
    <property type="evidence" value="ECO:0000250"/>
    <property type="project" value="UniProtKB"/>
</dbReference>
<dbReference type="GO" id="GO:0002926">
    <property type="term" value="P:tRNA wobble base 5-methoxycarbonylmethyl-2-thiouridinylation"/>
    <property type="evidence" value="ECO:0000250"/>
    <property type="project" value="UniProtKB"/>
</dbReference>
<dbReference type="CDD" id="cd06183">
    <property type="entry name" value="cyt_b5_reduct_like"/>
    <property type="match status" value="1"/>
</dbReference>
<dbReference type="FunFam" id="2.40.30.10:FF:000032">
    <property type="entry name" value="NADH-cytochrome b5 reductase"/>
    <property type="match status" value="1"/>
</dbReference>
<dbReference type="FunFam" id="3.40.50.80:FF:000019">
    <property type="entry name" value="NADH-cytochrome b5 reductase"/>
    <property type="match status" value="1"/>
</dbReference>
<dbReference type="Gene3D" id="3.40.50.80">
    <property type="entry name" value="Nucleotide-binding domain of ferredoxin-NADP reductase (FNR) module"/>
    <property type="match status" value="1"/>
</dbReference>
<dbReference type="Gene3D" id="2.40.30.10">
    <property type="entry name" value="Translation factors"/>
    <property type="match status" value="1"/>
</dbReference>
<dbReference type="InterPro" id="IPR001834">
    <property type="entry name" value="CBR-like"/>
</dbReference>
<dbReference type="InterPro" id="IPR008333">
    <property type="entry name" value="Cbr1-like_FAD-bd_dom"/>
</dbReference>
<dbReference type="InterPro" id="IPR017927">
    <property type="entry name" value="FAD-bd_FR_type"/>
</dbReference>
<dbReference type="InterPro" id="IPR001709">
    <property type="entry name" value="Flavoprot_Pyr_Nucl_cyt_Rdtase"/>
</dbReference>
<dbReference type="InterPro" id="IPR039261">
    <property type="entry name" value="FNR_nucleotide-bd"/>
</dbReference>
<dbReference type="InterPro" id="IPR001433">
    <property type="entry name" value="OxRdtase_FAD/NAD-bd"/>
</dbReference>
<dbReference type="InterPro" id="IPR017938">
    <property type="entry name" value="Riboflavin_synthase-like_b-brl"/>
</dbReference>
<dbReference type="PANTHER" id="PTHR19370">
    <property type="entry name" value="NADH-CYTOCHROME B5 REDUCTASE"/>
    <property type="match status" value="1"/>
</dbReference>
<dbReference type="PANTHER" id="PTHR19370:SF184">
    <property type="entry name" value="NADH-CYTOCHROME B5 REDUCTASE-LIKE"/>
    <property type="match status" value="1"/>
</dbReference>
<dbReference type="Pfam" id="PF00970">
    <property type="entry name" value="FAD_binding_6"/>
    <property type="match status" value="1"/>
</dbReference>
<dbReference type="Pfam" id="PF00175">
    <property type="entry name" value="NAD_binding_1"/>
    <property type="match status" value="1"/>
</dbReference>
<dbReference type="PRINTS" id="PR00406">
    <property type="entry name" value="CYTB5RDTASE"/>
</dbReference>
<dbReference type="PRINTS" id="PR00371">
    <property type="entry name" value="FPNCR"/>
</dbReference>
<dbReference type="SUPFAM" id="SSF52343">
    <property type="entry name" value="Ferredoxin reductase-like, C-terminal NADP-linked domain"/>
    <property type="match status" value="1"/>
</dbReference>
<dbReference type="SUPFAM" id="SSF63380">
    <property type="entry name" value="Riboflavin synthase domain-like"/>
    <property type="match status" value="1"/>
</dbReference>
<dbReference type="PROSITE" id="PS51384">
    <property type="entry name" value="FAD_FR"/>
    <property type="match status" value="1"/>
</dbReference>
<gene>
    <name type="primary">MCR1.1</name>
    <name type="ORF">LACBIDRAFT_300832</name>
</gene>
<reference key="1">
    <citation type="journal article" date="2008" name="Nature">
        <title>The genome of Laccaria bicolor provides insights into mycorrhizal symbiosis.</title>
        <authorList>
            <person name="Martin F."/>
            <person name="Aerts A."/>
            <person name="Ahren D."/>
            <person name="Brun A."/>
            <person name="Danchin E.G.J."/>
            <person name="Duchaussoy F."/>
            <person name="Gibon J."/>
            <person name="Kohler A."/>
            <person name="Lindquist E."/>
            <person name="Pereda V."/>
            <person name="Salamov A."/>
            <person name="Shapiro H.J."/>
            <person name="Wuyts J."/>
            <person name="Blaudez D."/>
            <person name="Buee M."/>
            <person name="Brokstein P."/>
            <person name="Canbaeck B."/>
            <person name="Cohen D."/>
            <person name="Courty P.E."/>
            <person name="Coutinho P.M."/>
            <person name="Delaruelle C."/>
            <person name="Detter J.C."/>
            <person name="Deveau A."/>
            <person name="DiFazio S."/>
            <person name="Duplessis S."/>
            <person name="Fraissinet-Tachet L."/>
            <person name="Lucic E."/>
            <person name="Frey-Klett P."/>
            <person name="Fourrey C."/>
            <person name="Feussner I."/>
            <person name="Gay G."/>
            <person name="Grimwood J."/>
            <person name="Hoegger P.J."/>
            <person name="Jain P."/>
            <person name="Kilaru S."/>
            <person name="Labbe J."/>
            <person name="Lin Y.C."/>
            <person name="Legue V."/>
            <person name="Le Tacon F."/>
            <person name="Marmeisse R."/>
            <person name="Melayah D."/>
            <person name="Montanini B."/>
            <person name="Muratet M."/>
            <person name="Nehls U."/>
            <person name="Niculita-Hirzel H."/>
            <person name="Oudot-Le Secq M.P."/>
            <person name="Peter M."/>
            <person name="Quesneville H."/>
            <person name="Rajashekar B."/>
            <person name="Reich M."/>
            <person name="Rouhier N."/>
            <person name="Schmutz J."/>
            <person name="Yin T."/>
            <person name="Chalot M."/>
            <person name="Henrissat B."/>
            <person name="Kuees U."/>
            <person name="Lucas S."/>
            <person name="Van de Peer Y."/>
            <person name="Podila G.K."/>
            <person name="Polle A."/>
            <person name="Pukkila P.J."/>
            <person name="Richardson P.M."/>
            <person name="Rouze P."/>
            <person name="Sanders I.R."/>
            <person name="Stajich J.E."/>
            <person name="Tunlid A."/>
            <person name="Tuskan G."/>
            <person name="Grigoriev I.V."/>
        </authorList>
    </citation>
    <scope>NUCLEOTIDE SEQUENCE [LARGE SCALE GENOMIC DNA]</scope>
    <source>
        <strain>S238N-H82 / ATCC MYA-4686</strain>
    </source>
</reference>
<organism>
    <name type="scientific">Laccaria bicolor (strain S238N-H82 / ATCC MYA-4686)</name>
    <name type="common">Bicoloured deceiver</name>
    <name type="synonym">Laccaria laccata var. bicolor</name>
    <dbReference type="NCBI Taxonomy" id="486041"/>
    <lineage>
        <taxon>Eukaryota</taxon>
        <taxon>Fungi</taxon>
        <taxon>Dikarya</taxon>
        <taxon>Basidiomycota</taxon>
        <taxon>Agaricomycotina</taxon>
        <taxon>Agaricomycetes</taxon>
        <taxon>Agaricomycetidae</taxon>
        <taxon>Agaricales</taxon>
        <taxon>Agaricineae</taxon>
        <taxon>Hydnangiaceae</taxon>
        <taxon>Laccaria</taxon>
    </lineage>
</organism>
<feature type="chain" id="PRO_0000330155" description="NADH-cytochrome b5 reductase 1">
    <location>
        <begin position="1"/>
        <end position="308"/>
    </location>
</feature>
<feature type="transmembrane region" description="Helical" evidence="3">
    <location>
        <begin position="29"/>
        <end position="49"/>
    </location>
</feature>
<feature type="domain" description="FAD-binding FR-type" evidence="4">
    <location>
        <begin position="64"/>
        <end position="167"/>
    </location>
</feature>
<feature type="binding site" evidence="1">
    <location>
        <begin position="147"/>
        <end position="162"/>
    </location>
    <ligand>
        <name>FAD</name>
        <dbReference type="ChEBI" id="CHEBI:57692"/>
    </ligand>
</feature>
<feature type="binding site" evidence="1">
    <location>
        <begin position="173"/>
        <end position="205"/>
    </location>
    <ligand>
        <name>FAD</name>
        <dbReference type="ChEBI" id="CHEBI:57692"/>
    </ligand>
</feature>
<name>NCB5R_LACBS</name>
<accession>B0CQN7</accession>